<protein>
    <recommendedName>
        <fullName>NADH-ubiquinone oxidoreductase chain 1</fullName>
        <ecNumber>7.1.1.2</ecNumber>
    </recommendedName>
    <alternativeName>
        <fullName>NADH dehydrogenase subunit 1</fullName>
    </alternativeName>
</protein>
<keyword id="KW-0249">Electron transport</keyword>
<keyword id="KW-0472">Membrane</keyword>
<keyword id="KW-0496">Mitochondrion</keyword>
<keyword id="KW-0999">Mitochondrion inner membrane</keyword>
<keyword id="KW-0520">NAD</keyword>
<keyword id="KW-0679">Respiratory chain</keyword>
<keyword id="KW-1278">Translocase</keyword>
<keyword id="KW-0812">Transmembrane</keyword>
<keyword id="KW-1133">Transmembrane helix</keyword>
<keyword id="KW-0813">Transport</keyword>
<keyword id="KW-0830">Ubiquinone</keyword>
<comment type="function">
    <text evidence="1">Core subunit of the mitochondrial membrane respiratory chain NADH dehydrogenase (Complex I) that is believed to belong to the minimal assembly required for catalysis. Complex I functions in the transfer of electrons from NADH to the respiratory chain. The immediate electron acceptor for the enzyme is believed to be ubiquinone (By similarity).</text>
</comment>
<comment type="catalytic activity">
    <reaction>
        <text>a ubiquinone + NADH + 5 H(+)(in) = a ubiquinol + NAD(+) + 4 H(+)(out)</text>
        <dbReference type="Rhea" id="RHEA:29091"/>
        <dbReference type="Rhea" id="RHEA-COMP:9565"/>
        <dbReference type="Rhea" id="RHEA-COMP:9566"/>
        <dbReference type="ChEBI" id="CHEBI:15378"/>
        <dbReference type="ChEBI" id="CHEBI:16389"/>
        <dbReference type="ChEBI" id="CHEBI:17976"/>
        <dbReference type="ChEBI" id="CHEBI:57540"/>
        <dbReference type="ChEBI" id="CHEBI:57945"/>
        <dbReference type="EC" id="7.1.1.2"/>
    </reaction>
</comment>
<comment type="subcellular location">
    <subcellularLocation>
        <location evidence="1">Mitochondrion inner membrane</location>
        <topology evidence="1">Multi-pass membrane protein</topology>
    </subcellularLocation>
</comment>
<comment type="similarity">
    <text evidence="3">Belongs to the complex I subunit 1 family.</text>
</comment>
<accession>P51926</accession>
<accession>Q34287</accession>
<sequence>MEFILSLVGSLLLIICVLVSVAFLTLLERKVLGYIQIRKGPNKVGLMGIPQPFCDAIKLFTKEQTYPLLSNYLSYYISPIFSLFLSLFVWMCMPFFVKLYSFNLGGLFFLCCMSLGVYTVMVAGWSSNSNYALLGGLRAVAQTISYEVSLALIGFKILLFSLL</sequence>
<feature type="chain" id="PRO_0000117385" description="NADH-ubiquinone oxidoreductase chain 1">
    <location>
        <begin position="1"/>
        <end position="163"/>
    </location>
</feature>
<feature type="transmembrane region" description="Helical" evidence="2">
    <location>
        <begin position="3"/>
        <end position="23"/>
    </location>
</feature>
<feature type="transmembrane region" description="Helical" evidence="2">
    <location>
        <begin position="77"/>
        <end position="97"/>
    </location>
</feature>
<feature type="transmembrane region" description="Helical" evidence="2">
    <location>
        <begin position="104"/>
        <end position="124"/>
    </location>
</feature>
<feature type="transmembrane region" description="Helical" evidence="2">
    <location>
        <begin position="143"/>
        <end position="163"/>
    </location>
</feature>
<feature type="non-consecutive residues" evidence="3">
    <location>
        <begin position="152"/>
        <end position="153"/>
    </location>
</feature>
<geneLocation type="mitochondrion"/>
<evidence type="ECO:0000250" key="1"/>
<evidence type="ECO:0000255" key="2"/>
<evidence type="ECO:0000305" key="3"/>
<name>NU1M_DROAI</name>
<gene>
    <name type="primary">mt:ND1</name>
    <name type="synonym">ND1</name>
</gene>
<reference key="1">
    <citation type="journal article" date="1994" name="J. Mol. Evol.">
        <title>Phylogeny of the Drosophila obscura species group deduced from mitochondrial DNA sequences.</title>
        <authorList>
            <person name="Barrio E."/>
            <person name="Latorre A."/>
            <person name="Moya A."/>
        </authorList>
    </citation>
    <scope>NUCLEOTIDE SEQUENCE [GENOMIC DNA]</scope>
</reference>
<organism>
    <name type="scientific">Drosophila affinis</name>
    <name type="common">Fruit fly</name>
    <dbReference type="NCBI Taxonomy" id="7246"/>
    <lineage>
        <taxon>Eukaryota</taxon>
        <taxon>Metazoa</taxon>
        <taxon>Ecdysozoa</taxon>
        <taxon>Arthropoda</taxon>
        <taxon>Hexapoda</taxon>
        <taxon>Insecta</taxon>
        <taxon>Pterygota</taxon>
        <taxon>Neoptera</taxon>
        <taxon>Endopterygota</taxon>
        <taxon>Diptera</taxon>
        <taxon>Brachycera</taxon>
        <taxon>Muscomorpha</taxon>
        <taxon>Ephydroidea</taxon>
        <taxon>Drosophilidae</taxon>
        <taxon>Drosophila</taxon>
        <taxon>Sophophora</taxon>
    </lineage>
</organism>
<dbReference type="EC" id="7.1.1.2"/>
<dbReference type="EMBL" id="U07273">
    <property type="protein sequence ID" value="AAA76583.1"/>
    <property type="molecule type" value="Genomic_DNA"/>
</dbReference>
<dbReference type="EMBL" id="U07274">
    <property type="protein sequence ID" value="AAA76584.1"/>
    <property type="molecule type" value="Genomic_DNA"/>
</dbReference>
<dbReference type="SMR" id="P51926"/>
<dbReference type="GO" id="GO:0005743">
    <property type="term" value="C:mitochondrial inner membrane"/>
    <property type="evidence" value="ECO:0007669"/>
    <property type="project" value="UniProtKB-SubCell"/>
</dbReference>
<dbReference type="GO" id="GO:0008137">
    <property type="term" value="F:NADH dehydrogenase (ubiquinone) activity"/>
    <property type="evidence" value="ECO:0007669"/>
    <property type="project" value="UniProtKB-EC"/>
</dbReference>
<dbReference type="GO" id="GO:0009060">
    <property type="term" value="P:aerobic respiration"/>
    <property type="evidence" value="ECO:0007669"/>
    <property type="project" value="TreeGrafter"/>
</dbReference>
<dbReference type="InterPro" id="IPR001694">
    <property type="entry name" value="NADH_UbQ_OxRdtase_su1/FPO"/>
</dbReference>
<dbReference type="InterPro" id="IPR018086">
    <property type="entry name" value="NADH_UbQ_OxRdtase_su1_CS"/>
</dbReference>
<dbReference type="PANTHER" id="PTHR11432">
    <property type="entry name" value="NADH DEHYDROGENASE SUBUNIT 1"/>
    <property type="match status" value="1"/>
</dbReference>
<dbReference type="PANTHER" id="PTHR11432:SF3">
    <property type="entry name" value="NADH-UBIQUINONE OXIDOREDUCTASE CHAIN 1"/>
    <property type="match status" value="1"/>
</dbReference>
<dbReference type="Pfam" id="PF00146">
    <property type="entry name" value="NADHdh"/>
    <property type="match status" value="1"/>
</dbReference>
<dbReference type="PROSITE" id="PS00667">
    <property type="entry name" value="COMPLEX1_ND1_1"/>
    <property type="match status" value="1"/>
</dbReference>
<proteinExistence type="inferred from homology"/>